<reference key="1">
    <citation type="journal article" date="2000" name="Mol. Phylogenet. Evol.">
        <title>Molecular systematics of pikas (genus Ochotona) inferred from mitochondrial DNA sequences.</title>
        <authorList>
            <person name="Yu N."/>
            <person name="Zheng C."/>
            <person name="Zhang Y.P."/>
            <person name="Li W.H."/>
        </authorList>
    </citation>
    <scope>NUCLEOTIDE SEQUENCE [GENOMIC DNA]</scope>
</reference>
<protein>
    <recommendedName>
        <fullName>Cytochrome b</fullName>
    </recommendedName>
    <alternativeName>
        <fullName>Complex III subunit 3</fullName>
    </alternativeName>
    <alternativeName>
        <fullName>Complex III subunit III</fullName>
    </alternativeName>
    <alternativeName>
        <fullName>Cytochrome b-c1 complex subunit 3</fullName>
    </alternativeName>
    <alternativeName>
        <fullName>Ubiquinol-cytochrome-c reductase complex cytochrome b subunit</fullName>
    </alternativeName>
</protein>
<organism>
    <name type="scientific">Ochotona nubrica</name>
    <name type="common">Nubra pika</name>
    <dbReference type="NCBI Taxonomy" id="130838"/>
    <lineage>
        <taxon>Eukaryota</taxon>
        <taxon>Metazoa</taxon>
        <taxon>Chordata</taxon>
        <taxon>Craniata</taxon>
        <taxon>Vertebrata</taxon>
        <taxon>Euteleostomi</taxon>
        <taxon>Mammalia</taxon>
        <taxon>Eutheria</taxon>
        <taxon>Euarchontoglires</taxon>
        <taxon>Glires</taxon>
        <taxon>Lagomorpha</taxon>
        <taxon>Ochotonidae</taxon>
        <taxon>Ochotona</taxon>
    </lineage>
</organism>
<keyword id="KW-0249">Electron transport</keyword>
<keyword id="KW-0349">Heme</keyword>
<keyword id="KW-0408">Iron</keyword>
<keyword id="KW-0472">Membrane</keyword>
<keyword id="KW-0479">Metal-binding</keyword>
<keyword id="KW-0496">Mitochondrion</keyword>
<keyword id="KW-0999">Mitochondrion inner membrane</keyword>
<keyword id="KW-0679">Respiratory chain</keyword>
<keyword id="KW-0812">Transmembrane</keyword>
<keyword id="KW-1133">Transmembrane helix</keyword>
<keyword id="KW-0813">Transport</keyword>
<keyword id="KW-0830">Ubiquinone</keyword>
<evidence type="ECO:0000250" key="1"/>
<evidence type="ECO:0000250" key="2">
    <source>
        <dbReference type="UniProtKB" id="P00157"/>
    </source>
</evidence>
<evidence type="ECO:0000255" key="3">
    <source>
        <dbReference type="PROSITE-ProRule" id="PRU00967"/>
    </source>
</evidence>
<evidence type="ECO:0000255" key="4">
    <source>
        <dbReference type="PROSITE-ProRule" id="PRU00968"/>
    </source>
</evidence>
<dbReference type="EMBL" id="AF272991">
    <property type="protein sequence ID" value="AAG00186.1"/>
    <property type="molecule type" value="Genomic_DNA"/>
</dbReference>
<dbReference type="SMR" id="Q9GBZ2"/>
<dbReference type="GO" id="GO:0005743">
    <property type="term" value="C:mitochondrial inner membrane"/>
    <property type="evidence" value="ECO:0007669"/>
    <property type="project" value="UniProtKB-SubCell"/>
</dbReference>
<dbReference type="GO" id="GO:0045275">
    <property type="term" value="C:respiratory chain complex III"/>
    <property type="evidence" value="ECO:0007669"/>
    <property type="project" value="InterPro"/>
</dbReference>
<dbReference type="GO" id="GO:0046872">
    <property type="term" value="F:metal ion binding"/>
    <property type="evidence" value="ECO:0007669"/>
    <property type="project" value="UniProtKB-KW"/>
</dbReference>
<dbReference type="GO" id="GO:0008121">
    <property type="term" value="F:ubiquinol-cytochrome-c reductase activity"/>
    <property type="evidence" value="ECO:0007669"/>
    <property type="project" value="InterPro"/>
</dbReference>
<dbReference type="GO" id="GO:0006122">
    <property type="term" value="P:mitochondrial electron transport, ubiquinol to cytochrome c"/>
    <property type="evidence" value="ECO:0007669"/>
    <property type="project" value="TreeGrafter"/>
</dbReference>
<dbReference type="CDD" id="cd00290">
    <property type="entry name" value="cytochrome_b_C"/>
    <property type="match status" value="1"/>
</dbReference>
<dbReference type="CDD" id="cd00284">
    <property type="entry name" value="Cytochrome_b_N"/>
    <property type="match status" value="1"/>
</dbReference>
<dbReference type="FunFam" id="1.20.810.10:FF:000002">
    <property type="entry name" value="Cytochrome b"/>
    <property type="match status" value="1"/>
</dbReference>
<dbReference type="Gene3D" id="1.20.810.10">
    <property type="entry name" value="Cytochrome Bc1 Complex, Chain C"/>
    <property type="match status" value="1"/>
</dbReference>
<dbReference type="InterPro" id="IPR005798">
    <property type="entry name" value="Cyt_b/b6_C"/>
</dbReference>
<dbReference type="InterPro" id="IPR036150">
    <property type="entry name" value="Cyt_b/b6_C_sf"/>
</dbReference>
<dbReference type="InterPro" id="IPR005797">
    <property type="entry name" value="Cyt_b/b6_N"/>
</dbReference>
<dbReference type="InterPro" id="IPR027387">
    <property type="entry name" value="Cytb/b6-like_sf"/>
</dbReference>
<dbReference type="InterPro" id="IPR030689">
    <property type="entry name" value="Cytochrome_b"/>
</dbReference>
<dbReference type="InterPro" id="IPR048260">
    <property type="entry name" value="Cytochrome_b_C_euk/bac"/>
</dbReference>
<dbReference type="InterPro" id="IPR048259">
    <property type="entry name" value="Cytochrome_b_N_euk/bac"/>
</dbReference>
<dbReference type="InterPro" id="IPR016174">
    <property type="entry name" value="Di-haem_cyt_TM"/>
</dbReference>
<dbReference type="PANTHER" id="PTHR19271">
    <property type="entry name" value="CYTOCHROME B"/>
    <property type="match status" value="1"/>
</dbReference>
<dbReference type="PANTHER" id="PTHR19271:SF16">
    <property type="entry name" value="CYTOCHROME B"/>
    <property type="match status" value="1"/>
</dbReference>
<dbReference type="Pfam" id="PF00032">
    <property type="entry name" value="Cytochrom_B_C"/>
    <property type="match status" value="1"/>
</dbReference>
<dbReference type="Pfam" id="PF00033">
    <property type="entry name" value="Cytochrome_B"/>
    <property type="match status" value="1"/>
</dbReference>
<dbReference type="PIRSF" id="PIRSF038885">
    <property type="entry name" value="COB"/>
    <property type="match status" value="1"/>
</dbReference>
<dbReference type="SUPFAM" id="SSF81648">
    <property type="entry name" value="a domain/subunit of cytochrome bc1 complex (Ubiquinol-cytochrome c reductase)"/>
    <property type="match status" value="1"/>
</dbReference>
<dbReference type="SUPFAM" id="SSF81342">
    <property type="entry name" value="Transmembrane di-heme cytochromes"/>
    <property type="match status" value="1"/>
</dbReference>
<dbReference type="PROSITE" id="PS51003">
    <property type="entry name" value="CYTB_CTER"/>
    <property type="match status" value="1"/>
</dbReference>
<dbReference type="PROSITE" id="PS51002">
    <property type="entry name" value="CYTB_NTER"/>
    <property type="match status" value="1"/>
</dbReference>
<name>CYB_OCHNB</name>
<comment type="function">
    <text evidence="2">Component of the ubiquinol-cytochrome c reductase complex (complex III or cytochrome b-c1 complex) that is part of the mitochondrial respiratory chain. The b-c1 complex mediates electron transfer from ubiquinol to cytochrome c. Contributes to the generation of a proton gradient across the mitochondrial membrane that is then used for ATP synthesis.</text>
</comment>
<comment type="cofactor">
    <cofactor evidence="2">
        <name>heme b</name>
        <dbReference type="ChEBI" id="CHEBI:60344"/>
    </cofactor>
    <text evidence="2">Binds 2 heme b groups non-covalently.</text>
</comment>
<comment type="subunit">
    <text evidence="2">The cytochrome bc1 complex contains 11 subunits: 3 respiratory subunits (MT-CYB, CYC1 and UQCRFS1), 2 core proteins (UQCRC1 and UQCRC2) and 6 low-molecular weight proteins (UQCRH/QCR6, UQCRB/QCR7, UQCRQ/QCR8, UQCR10/QCR9, UQCR11/QCR10 and a cleavage product of UQCRFS1). This cytochrome bc1 complex then forms a dimer.</text>
</comment>
<comment type="subcellular location">
    <subcellularLocation>
        <location evidence="2">Mitochondrion inner membrane</location>
        <topology evidence="2">Multi-pass membrane protein</topology>
    </subcellularLocation>
</comment>
<comment type="miscellaneous">
    <text evidence="1">Heme 1 (or BL or b562) is low-potential and absorbs at about 562 nm, and heme 2 (or BH or b566) is high-potential and absorbs at about 566 nm.</text>
</comment>
<comment type="similarity">
    <text evidence="3 4">Belongs to the cytochrome b family.</text>
</comment>
<comment type="caution">
    <text evidence="2">The full-length protein contains only eight transmembrane helices, not nine as predicted by bioinformatics tools.</text>
</comment>
<gene>
    <name type="primary">MT-CYB</name>
    <name type="synonym">COB</name>
    <name type="synonym">CYTB</name>
    <name type="synonym">MTCYB</name>
</gene>
<accession>Q9GBZ2</accession>
<sequence>MTNIRKSHPLMKIVNHSLIDLPAPSNISAWWNFGSLLGLCLGIQIITGLFLAMHYTSDTLTAFSSVTHICRDVNYGWIIRYLHANGASMFFICLFLHVGRGIYYGSYTYSETWNIGILLLFAVMATAFMGYVLPWGQMSFWGATVITNLLSAIPYIGTDLVQWIWGGFSVDKATLTRFFAFHFILPFIIAALVMVHLLFLHETGSNNPTGIISDADKIPFHPYYTIKDALGFLLLTALLLTLVLFSPDLLGDPDNYTPANPLNTPPHIKPEWYFLFAYAILRSIPNKLGGVLALVLSIAILAVMPLLHTSKQRSMMFRPISQCLFWVLVADLLTLTWIGGQPVEHPFIIIGQLASFLYFSLILILMPTCSLIENKLLKW</sequence>
<proteinExistence type="inferred from homology"/>
<feature type="chain" id="PRO_0000061305" description="Cytochrome b">
    <location>
        <begin position="1"/>
        <end position="379"/>
    </location>
</feature>
<feature type="transmembrane region" description="Helical" evidence="2">
    <location>
        <begin position="33"/>
        <end position="53"/>
    </location>
</feature>
<feature type="transmembrane region" description="Helical" evidence="2">
    <location>
        <begin position="77"/>
        <end position="98"/>
    </location>
</feature>
<feature type="transmembrane region" description="Helical" evidence="2">
    <location>
        <begin position="113"/>
        <end position="133"/>
    </location>
</feature>
<feature type="transmembrane region" description="Helical" evidence="2">
    <location>
        <begin position="178"/>
        <end position="198"/>
    </location>
</feature>
<feature type="transmembrane region" description="Helical" evidence="2">
    <location>
        <begin position="226"/>
        <end position="246"/>
    </location>
</feature>
<feature type="transmembrane region" description="Helical" evidence="2">
    <location>
        <begin position="288"/>
        <end position="308"/>
    </location>
</feature>
<feature type="transmembrane region" description="Helical" evidence="2">
    <location>
        <begin position="320"/>
        <end position="340"/>
    </location>
</feature>
<feature type="transmembrane region" description="Helical" evidence="2">
    <location>
        <begin position="347"/>
        <end position="367"/>
    </location>
</feature>
<feature type="binding site" description="axial binding residue" evidence="2">
    <location>
        <position position="83"/>
    </location>
    <ligand>
        <name>heme b</name>
        <dbReference type="ChEBI" id="CHEBI:60344"/>
        <label>b562</label>
    </ligand>
    <ligandPart>
        <name>Fe</name>
        <dbReference type="ChEBI" id="CHEBI:18248"/>
    </ligandPart>
</feature>
<feature type="binding site" description="axial binding residue" evidence="2">
    <location>
        <position position="97"/>
    </location>
    <ligand>
        <name>heme b</name>
        <dbReference type="ChEBI" id="CHEBI:60344"/>
        <label>b566</label>
    </ligand>
    <ligandPart>
        <name>Fe</name>
        <dbReference type="ChEBI" id="CHEBI:18248"/>
    </ligandPart>
</feature>
<feature type="binding site" description="axial binding residue" evidence="2">
    <location>
        <position position="182"/>
    </location>
    <ligand>
        <name>heme b</name>
        <dbReference type="ChEBI" id="CHEBI:60344"/>
        <label>b562</label>
    </ligand>
    <ligandPart>
        <name>Fe</name>
        <dbReference type="ChEBI" id="CHEBI:18248"/>
    </ligandPart>
</feature>
<feature type="binding site" description="axial binding residue" evidence="2">
    <location>
        <position position="196"/>
    </location>
    <ligand>
        <name>heme b</name>
        <dbReference type="ChEBI" id="CHEBI:60344"/>
        <label>b566</label>
    </ligand>
    <ligandPart>
        <name>Fe</name>
        <dbReference type="ChEBI" id="CHEBI:18248"/>
    </ligandPart>
</feature>
<feature type="binding site" evidence="2">
    <location>
        <position position="201"/>
    </location>
    <ligand>
        <name>a ubiquinone</name>
        <dbReference type="ChEBI" id="CHEBI:16389"/>
    </ligand>
</feature>
<geneLocation type="mitochondrion"/>